<keyword id="KW-1185">Reference proteome</keyword>
<evidence type="ECO:0000255" key="1">
    <source>
        <dbReference type="HAMAP-Rule" id="MF_00048"/>
    </source>
</evidence>
<accession>A8LJ68</accession>
<comment type="similarity">
    <text evidence="1">Belongs to the UPF0102 family.</text>
</comment>
<reference key="1">
    <citation type="journal article" date="2010" name="ISME J.">
        <title>The complete genome sequence of the algal symbiont Dinoroseobacter shibae: a hitchhiker's guide to life in the sea.</title>
        <authorList>
            <person name="Wagner-Dobler I."/>
            <person name="Ballhausen B."/>
            <person name="Berger M."/>
            <person name="Brinkhoff T."/>
            <person name="Buchholz I."/>
            <person name="Bunk B."/>
            <person name="Cypionka H."/>
            <person name="Daniel R."/>
            <person name="Drepper T."/>
            <person name="Gerdts G."/>
            <person name="Hahnke S."/>
            <person name="Han C."/>
            <person name="Jahn D."/>
            <person name="Kalhoefer D."/>
            <person name="Kiss H."/>
            <person name="Klenk H.P."/>
            <person name="Kyrpides N."/>
            <person name="Liebl W."/>
            <person name="Liesegang H."/>
            <person name="Meincke L."/>
            <person name="Pati A."/>
            <person name="Petersen J."/>
            <person name="Piekarski T."/>
            <person name="Pommerenke C."/>
            <person name="Pradella S."/>
            <person name="Pukall R."/>
            <person name="Rabus R."/>
            <person name="Stackebrandt E."/>
            <person name="Thole S."/>
            <person name="Thompson L."/>
            <person name="Tielen P."/>
            <person name="Tomasch J."/>
            <person name="von Jan M."/>
            <person name="Wanphrut N."/>
            <person name="Wichels A."/>
            <person name="Zech H."/>
            <person name="Simon M."/>
        </authorList>
    </citation>
    <scope>NUCLEOTIDE SEQUENCE [LARGE SCALE GENOMIC DNA]</scope>
    <source>
        <strain>DSM 16493 / NCIMB 14021 / DFL 12</strain>
    </source>
</reference>
<proteinExistence type="inferred from homology"/>
<sequence length="134" mass="14728">MTIAVQTRDLSPLARARQARGTRAMLSGAAAEARVERAYRDRGCDVLATRWRGSGGEVDLIVRRGDLLVFVEVKSSASYTRAIESLSLAQLTRIQNTALEFLDRSPDLAGLEMRFDLAVVEGSGRFRVLANITM</sequence>
<dbReference type="EMBL" id="CP000830">
    <property type="protein sequence ID" value="ABV94563.1"/>
    <property type="molecule type" value="Genomic_DNA"/>
</dbReference>
<dbReference type="RefSeq" id="WP_012179491.1">
    <property type="nucleotide sequence ID" value="NC_009952.1"/>
</dbReference>
<dbReference type="SMR" id="A8LJ68"/>
<dbReference type="STRING" id="398580.Dshi_2830"/>
<dbReference type="KEGG" id="dsh:Dshi_2830"/>
<dbReference type="eggNOG" id="COG0792">
    <property type="taxonomic scope" value="Bacteria"/>
</dbReference>
<dbReference type="HOGENOM" id="CLU_115353_0_1_5"/>
<dbReference type="OrthoDB" id="9812968at2"/>
<dbReference type="Proteomes" id="UP000006833">
    <property type="component" value="Chromosome"/>
</dbReference>
<dbReference type="GO" id="GO:0003676">
    <property type="term" value="F:nucleic acid binding"/>
    <property type="evidence" value="ECO:0007669"/>
    <property type="project" value="InterPro"/>
</dbReference>
<dbReference type="Gene3D" id="3.40.1350.10">
    <property type="match status" value="1"/>
</dbReference>
<dbReference type="HAMAP" id="MF_00048">
    <property type="entry name" value="UPF0102"/>
    <property type="match status" value="1"/>
</dbReference>
<dbReference type="InterPro" id="IPR011335">
    <property type="entry name" value="Restrct_endonuc-II-like"/>
</dbReference>
<dbReference type="InterPro" id="IPR011856">
    <property type="entry name" value="tRNA_endonuc-like_dom_sf"/>
</dbReference>
<dbReference type="InterPro" id="IPR003509">
    <property type="entry name" value="UPF0102_YraN-like"/>
</dbReference>
<dbReference type="PANTHER" id="PTHR34039">
    <property type="entry name" value="UPF0102 PROTEIN YRAN"/>
    <property type="match status" value="1"/>
</dbReference>
<dbReference type="PANTHER" id="PTHR34039:SF1">
    <property type="entry name" value="UPF0102 PROTEIN YRAN"/>
    <property type="match status" value="1"/>
</dbReference>
<dbReference type="Pfam" id="PF02021">
    <property type="entry name" value="UPF0102"/>
    <property type="match status" value="1"/>
</dbReference>
<dbReference type="SUPFAM" id="SSF52980">
    <property type="entry name" value="Restriction endonuclease-like"/>
    <property type="match status" value="1"/>
</dbReference>
<name>Y2830_DINSH</name>
<gene>
    <name type="ordered locus">Dshi_2830</name>
</gene>
<protein>
    <recommendedName>
        <fullName evidence="1">UPF0102 protein Dshi_2830</fullName>
    </recommendedName>
</protein>
<feature type="chain" id="PRO_0000336170" description="UPF0102 protein Dshi_2830">
    <location>
        <begin position="1"/>
        <end position="134"/>
    </location>
</feature>
<organism>
    <name type="scientific">Dinoroseobacter shibae (strain DSM 16493 / NCIMB 14021 / DFL 12)</name>
    <dbReference type="NCBI Taxonomy" id="398580"/>
    <lineage>
        <taxon>Bacteria</taxon>
        <taxon>Pseudomonadati</taxon>
        <taxon>Pseudomonadota</taxon>
        <taxon>Alphaproteobacteria</taxon>
        <taxon>Rhodobacterales</taxon>
        <taxon>Roseobacteraceae</taxon>
        <taxon>Dinoroseobacter</taxon>
    </lineage>
</organism>